<name>SYC_LEPIC</name>
<gene>
    <name evidence="1" type="primary">cysS</name>
    <name type="ordered locus">LIC_12028</name>
</gene>
<dbReference type="EC" id="6.1.1.16" evidence="1"/>
<dbReference type="EMBL" id="AE016823">
    <property type="protein sequence ID" value="AAS70603.1"/>
    <property type="molecule type" value="Genomic_DNA"/>
</dbReference>
<dbReference type="RefSeq" id="WP_000570129.1">
    <property type="nucleotide sequence ID" value="NC_005823.1"/>
</dbReference>
<dbReference type="SMR" id="Q72QT1"/>
<dbReference type="GeneID" id="61141919"/>
<dbReference type="KEGG" id="lic:LIC_12028"/>
<dbReference type="HOGENOM" id="CLU_013528_0_1_12"/>
<dbReference type="Proteomes" id="UP000007037">
    <property type="component" value="Chromosome I"/>
</dbReference>
<dbReference type="GO" id="GO:0005829">
    <property type="term" value="C:cytosol"/>
    <property type="evidence" value="ECO:0007669"/>
    <property type="project" value="TreeGrafter"/>
</dbReference>
<dbReference type="GO" id="GO:0005524">
    <property type="term" value="F:ATP binding"/>
    <property type="evidence" value="ECO:0007669"/>
    <property type="project" value="UniProtKB-UniRule"/>
</dbReference>
<dbReference type="GO" id="GO:0004817">
    <property type="term" value="F:cysteine-tRNA ligase activity"/>
    <property type="evidence" value="ECO:0007669"/>
    <property type="project" value="UniProtKB-UniRule"/>
</dbReference>
<dbReference type="GO" id="GO:0008270">
    <property type="term" value="F:zinc ion binding"/>
    <property type="evidence" value="ECO:0007669"/>
    <property type="project" value="UniProtKB-UniRule"/>
</dbReference>
<dbReference type="GO" id="GO:0006423">
    <property type="term" value="P:cysteinyl-tRNA aminoacylation"/>
    <property type="evidence" value="ECO:0007669"/>
    <property type="project" value="UniProtKB-UniRule"/>
</dbReference>
<dbReference type="CDD" id="cd00672">
    <property type="entry name" value="CysRS_core"/>
    <property type="match status" value="1"/>
</dbReference>
<dbReference type="FunFam" id="3.40.50.620:FF:000130">
    <property type="entry name" value="Cysteine--tRNA ligase"/>
    <property type="match status" value="1"/>
</dbReference>
<dbReference type="Gene3D" id="1.20.120.1910">
    <property type="entry name" value="Cysteine-tRNA ligase, C-terminal anti-codon recognition domain"/>
    <property type="match status" value="1"/>
</dbReference>
<dbReference type="Gene3D" id="3.40.50.620">
    <property type="entry name" value="HUPs"/>
    <property type="match status" value="1"/>
</dbReference>
<dbReference type="HAMAP" id="MF_00041">
    <property type="entry name" value="Cys_tRNA_synth"/>
    <property type="match status" value="1"/>
</dbReference>
<dbReference type="InterPro" id="IPR015803">
    <property type="entry name" value="Cys-tRNA-ligase"/>
</dbReference>
<dbReference type="InterPro" id="IPR015273">
    <property type="entry name" value="Cys-tRNA-synt_Ia_DALR"/>
</dbReference>
<dbReference type="InterPro" id="IPR024909">
    <property type="entry name" value="Cys-tRNA/MSH_ligase"/>
</dbReference>
<dbReference type="InterPro" id="IPR056411">
    <property type="entry name" value="CysS_C"/>
</dbReference>
<dbReference type="InterPro" id="IPR014729">
    <property type="entry name" value="Rossmann-like_a/b/a_fold"/>
</dbReference>
<dbReference type="InterPro" id="IPR032678">
    <property type="entry name" value="tRNA-synt_1_cat_dom"/>
</dbReference>
<dbReference type="InterPro" id="IPR009080">
    <property type="entry name" value="tRNAsynth_Ia_anticodon-bd"/>
</dbReference>
<dbReference type="NCBIfam" id="TIGR00435">
    <property type="entry name" value="cysS"/>
    <property type="match status" value="1"/>
</dbReference>
<dbReference type="PANTHER" id="PTHR10890:SF3">
    <property type="entry name" value="CYSTEINE--TRNA LIGASE, CYTOPLASMIC"/>
    <property type="match status" value="1"/>
</dbReference>
<dbReference type="PANTHER" id="PTHR10890">
    <property type="entry name" value="CYSTEINYL-TRNA SYNTHETASE"/>
    <property type="match status" value="1"/>
</dbReference>
<dbReference type="Pfam" id="PF23493">
    <property type="entry name" value="CysS_C"/>
    <property type="match status" value="1"/>
</dbReference>
<dbReference type="Pfam" id="PF09190">
    <property type="entry name" value="DALR_2"/>
    <property type="match status" value="1"/>
</dbReference>
<dbReference type="Pfam" id="PF01406">
    <property type="entry name" value="tRNA-synt_1e"/>
    <property type="match status" value="1"/>
</dbReference>
<dbReference type="PRINTS" id="PR00983">
    <property type="entry name" value="TRNASYNTHCYS"/>
</dbReference>
<dbReference type="SMART" id="SM00840">
    <property type="entry name" value="DALR_2"/>
    <property type="match status" value="1"/>
</dbReference>
<dbReference type="SUPFAM" id="SSF47323">
    <property type="entry name" value="Anticodon-binding domain of a subclass of class I aminoacyl-tRNA synthetases"/>
    <property type="match status" value="1"/>
</dbReference>
<dbReference type="SUPFAM" id="SSF52374">
    <property type="entry name" value="Nucleotidylyl transferase"/>
    <property type="match status" value="1"/>
</dbReference>
<feature type="chain" id="PRO_0000159419" description="Cysteine--tRNA ligase">
    <location>
        <begin position="1"/>
        <end position="471"/>
    </location>
</feature>
<feature type="short sequence motif" description="'HIGH' region">
    <location>
        <begin position="32"/>
        <end position="42"/>
    </location>
</feature>
<feature type="short sequence motif" description="'KMSKS' region">
    <location>
        <begin position="270"/>
        <end position="274"/>
    </location>
</feature>
<feature type="binding site" evidence="1">
    <location>
        <position position="30"/>
    </location>
    <ligand>
        <name>Zn(2+)</name>
        <dbReference type="ChEBI" id="CHEBI:29105"/>
    </ligand>
</feature>
<feature type="binding site" evidence="1">
    <location>
        <position position="212"/>
    </location>
    <ligand>
        <name>Zn(2+)</name>
        <dbReference type="ChEBI" id="CHEBI:29105"/>
    </ligand>
</feature>
<feature type="binding site" evidence="1">
    <location>
        <position position="237"/>
    </location>
    <ligand>
        <name>Zn(2+)</name>
        <dbReference type="ChEBI" id="CHEBI:29105"/>
    </ligand>
</feature>
<feature type="binding site" evidence="1">
    <location>
        <position position="241"/>
    </location>
    <ligand>
        <name>Zn(2+)</name>
        <dbReference type="ChEBI" id="CHEBI:29105"/>
    </ligand>
</feature>
<feature type="binding site" evidence="1">
    <location>
        <position position="273"/>
    </location>
    <ligand>
        <name>ATP</name>
        <dbReference type="ChEBI" id="CHEBI:30616"/>
    </ligand>
</feature>
<proteinExistence type="inferred from homology"/>
<sequence length="471" mass="54311">MIEIQFYNSLSGRKEKFSPSDPNRVTVYSCGPTVYNFAHIGNLRAFLFVDVLRRSLKLLGYGVDMTMNITDIDDKIIRDSIASKKSIIEFTAPWTKAFFEDLKTVSAEILEHYPKATDSIPEMVDIIQKLQKKGLVYEKDESLYFSIQKFQNYGKLSKIDTSGMKTGTRYDTDEYEKEDVRDFVLWKSPKLEGETSWYTLVGTGRPGWHLECSAMIRKVYGSGVDIHTGGVDLLFPHHENEIAQSEGAFPEESFVKTWLHSEHLLVDGQKMSKSKGNFYTLRDLIQQGLDPKAIRFLLISTHYRSKLNFSTDRIAEASANIRKIQNCLDRILELEPDIKADFYFLFSIPFVQTWKKEFEESLADDLNISKALAVVFESVKQINSLLDTNQSDSKQRIEYIQILAYFDRILGVLNFESKKDLLDSEIDSLIEERQIARKNKDFARSDAIRDQLLAQGILIEDTKEGIRWRKK</sequence>
<keyword id="KW-0030">Aminoacyl-tRNA synthetase</keyword>
<keyword id="KW-0067">ATP-binding</keyword>
<keyword id="KW-0963">Cytoplasm</keyword>
<keyword id="KW-0436">Ligase</keyword>
<keyword id="KW-0479">Metal-binding</keyword>
<keyword id="KW-0547">Nucleotide-binding</keyword>
<keyword id="KW-0648">Protein biosynthesis</keyword>
<keyword id="KW-0862">Zinc</keyword>
<evidence type="ECO:0000255" key="1">
    <source>
        <dbReference type="HAMAP-Rule" id="MF_00041"/>
    </source>
</evidence>
<accession>Q72QT1</accession>
<reference key="1">
    <citation type="journal article" date="2004" name="J. Bacteriol.">
        <title>Comparative genomics of two Leptospira interrogans serovars reveals novel insights into physiology and pathogenesis.</title>
        <authorList>
            <person name="Nascimento A.L.T.O."/>
            <person name="Ko A.I."/>
            <person name="Martins E.A.L."/>
            <person name="Monteiro-Vitorello C.B."/>
            <person name="Ho P.L."/>
            <person name="Haake D.A."/>
            <person name="Verjovski-Almeida S."/>
            <person name="Hartskeerl R.A."/>
            <person name="Marques M.V."/>
            <person name="Oliveira M.C."/>
            <person name="Menck C.F.M."/>
            <person name="Leite L.C.C."/>
            <person name="Carrer H."/>
            <person name="Coutinho L.L."/>
            <person name="Degrave W.M."/>
            <person name="Dellagostin O.A."/>
            <person name="El-Dorry H."/>
            <person name="Ferro E.S."/>
            <person name="Ferro M.I.T."/>
            <person name="Furlan L.R."/>
            <person name="Gamberini M."/>
            <person name="Giglioti E.A."/>
            <person name="Goes-Neto A."/>
            <person name="Goldman G.H."/>
            <person name="Goldman M.H.S."/>
            <person name="Harakava R."/>
            <person name="Jeronimo S.M.B."/>
            <person name="Junqueira-de-Azevedo I.L.M."/>
            <person name="Kimura E.T."/>
            <person name="Kuramae E.E."/>
            <person name="Lemos E.G.M."/>
            <person name="Lemos M.V.F."/>
            <person name="Marino C.L."/>
            <person name="Nunes L.R."/>
            <person name="de Oliveira R.C."/>
            <person name="Pereira G.G."/>
            <person name="Reis M.S."/>
            <person name="Schriefer A."/>
            <person name="Siqueira W.J."/>
            <person name="Sommer P."/>
            <person name="Tsai S.M."/>
            <person name="Simpson A.J.G."/>
            <person name="Ferro J.A."/>
            <person name="Camargo L.E.A."/>
            <person name="Kitajima J.P."/>
            <person name="Setubal J.C."/>
            <person name="Van Sluys M.A."/>
        </authorList>
    </citation>
    <scope>NUCLEOTIDE SEQUENCE [LARGE SCALE GENOMIC DNA]</scope>
    <source>
        <strain>Fiocruz L1-130</strain>
    </source>
</reference>
<organism>
    <name type="scientific">Leptospira interrogans serogroup Icterohaemorrhagiae serovar copenhageni (strain Fiocruz L1-130)</name>
    <dbReference type="NCBI Taxonomy" id="267671"/>
    <lineage>
        <taxon>Bacteria</taxon>
        <taxon>Pseudomonadati</taxon>
        <taxon>Spirochaetota</taxon>
        <taxon>Spirochaetia</taxon>
        <taxon>Leptospirales</taxon>
        <taxon>Leptospiraceae</taxon>
        <taxon>Leptospira</taxon>
    </lineage>
</organism>
<protein>
    <recommendedName>
        <fullName evidence="1">Cysteine--tRNA ligase</fullName>
        <ecNumber evidence="1">6.1.1.16</ecNumber>
    </recommendedName>
    <alternativeName>
        <fullName evidence="1">Cysteinyl-tRNA synthetase</fullName>
        <shortName evidence="1">CysRS</shortName>
    </alternativeName>
</protein>
<comment type="catalytic activity">
    <reaction evidence="1">
        <text>tRNA(Cys) + L-cysteine + ATP = L-cysteinyl-tRNA(Cys) + AMP + diphosphate</text>
        <dbReference type="Rhea" id="RHEA:17773"/>
        <dbReference type="Rhea" id="RHEA-COMP:9661"/>
        <dbReference type="Rhea" id="RHEA-COMP:9679"/>
        <dbReference type="ChEBI" id="CHEBI:30616"/>
        <dbReference type="ChEBI" id="CHEBI:33019"/>
        <dbReference type="ChEBI" id="CHEBI:35235"/>
        <dbReference type="ChEBI" id="CHEBI:78442"/>
        <dbReference type="ChEBI" id="CHEBI:78517"/>
        <dbReference type="ChEBI" id="CHEBI:456215"/>
        <dbReference type="EC" id="6.1.1.16"/>
    </reaction>
</comment>
<comment type="cofactor">
    <cofactor evidence="1">
        <name>Zn(2+)</name>
        <dbReference type="ChEBI" id="CHEBI:29105"/>
    </cofactor>
    <text evidence="1">Binds 1 zinc ion per subunit.</text>
</comment>
<comment type="subunit">
    <text evidence="1">Monomer.</text>
</comment>
<comment type="subcellular location">
    <subcellularLocation>
        <location evidence="1">Cytoplasm</location>
    </subcellularLocation>
</comment>
<comment type="similarity">
    <text evidence="1">Belongs to the class-I aminoacyl-tRNA synthetase family.</text>
</comment>